<organism>
    <name type="scientific">Chromohalobacter salexigens (strain ATCC BAA-138 / DSM 3043 / CIP 106854 / NCIMB 13768 / 1H11)</name>
    <dbReference type="NCBI Taxonomy" id="290398"/>
    <lineage>
        <taxon>Bacteria</taxon>
        <taxon>Pseudomonadati</taxon>
        <taxon>Pseudomonadota</taxon>
        <taxon>Gammaproteobacteria</taxon>
        <taxon>Oceanospirillales</taxon>
        <taxon>Halomonadaceae</taxon>
        <taxon>Chromohalobacter</taxon>
    </lineage>
</organism>
<comment type="function">
    <text evidence="1">Component of the acetyl coenzyme A carboxylase (ACC) complex. Biotin carboxylase (BC) catalyzes the carboxylation of biotin on its carrier protein (BCCP) and then the CO(2) group is transferred by the transcarboxylase to acetyl-CoA to form malonyl-CoA.</text>
</comment>
<comment type="catalytic activity">
    <reaction evidence="1">
        <text>N(6)-carboxybiotinyl-L-lysyl-[protein] + acetyl-CoA = N(6)-biotinyl-L-lysyl-[protein] + malonyl-CoA</text>
        <dbReference type="Rhea" id="RHEA:54728"/>
        <dbReference type="Rhea" id="RHEA-COMP:10505"/>
        <dbReference type="Rhea" id="RHEA-COMP:10506"/>
        <dbReference type="ChEBI" id="CHEBI:57288"/>
        <dbReference type="ChEBI" id="CHEBI:57384"/>
        <dbReference type="ChEBI" id="CHEBI:83144"/>
        <dbReference type="ChEBI" id="CHEBI:83145"/>
        <dbReference type="EC" id="2.1.3.15"/>
    </reaction>
</comment>
<comment type="cofactor">
    <cofactor evidence="1">
        <name>Zn(2+)</name>
        <dbReference type="ChEBI" id="CHEBI:29105"/>
    </cofactor>
    <text evidence="1">Binds 1 zinc ion per subunit.</text>
</comment>
<comment type="pathway">
    <text evidence="1">Lipid metabolism; malonyl-CoA biosynthesis; malonyl-CoA from acetyl-CoA: step 1/1.</text>
</comment>
<comment type="subunit">
    <text evidence="1">Acetyl-CoA carboxylase is a heterohexamer composed of biotin carboxyl carrier protein (AccB), biotin carboxylase (AccC) and two subunits each of ACCase subunit alpha (AccA) and ACCase subunit beta (AccD).</text>
</comment>
<comment type="subcellular location">
    <subcellularLocation>
        <location evidence="1">Cytoplasm</location>
    </subcellularLocation>
</comment>
<comment type="similarity">
    <text evidence="1">Belongs to the AccD/PCCB family.</text>
</comment>
<sequence>MSWLDKIVPSMSRTQRADRRKSVPDGLWRKCPNCEAVLYLPELERHQSVCPKCDHHLRLTARKRLNWFLDTEGREEIAADLQPVDRLKFRDSKKYKDRLAAAQKETDENDALIAMRGKLDGLPVVAVAFEFSFMGGSMGAVVGEKFVRAATQAREEGVPLVCFAASGGARMQEALFSLMQMAKTSAALEKLKQEGVPYISVLTDPVFGGVSASLAMLGDINVAEPNALIGFAGPRVIEQTVREQLPEGFQRSEFLLEHGTVDMIVHRHDMRERLGSVMRKLTHQPHQDRDAEPDDTASQSTLDEFSQADH</sequence>
<accession>Q1QY40</accession>
<feature type="chain" id="PRO_0000358963" description="Acetyl-coenzyme A carboxylase carboxyl transferase subunit beta">
    <location>
        <begin position="1"/>
        <end position="310"/>
    </location>
</feature>
<feature type="domain" description="CoA carboxyltransferase N-terminal" evidence="2">
    <location>
        <begin position="27"/>
        <end position="296"/>
    </location>
</feature>
<feature type="zinc finger region" description="C4-type" evidence="1">
    <location>
        <begin position="31"/>
        <end position="53"/>
    </location>
</feature>
<feature type="region of interest" description="Disordered" evidence="3">
    <location>
        <begin position="282"/>
        <end position="310"/>
    </location>
</feature>
<feature type="binding site" evidence="1">
    <location>
        <position position="31"/>
    </location>
    <ligand>
        <name>Zn(2+)</name>
        <dbReference type="ChEBI" id="CHEBI:29105"/>
    </ligand>
</feature>
<feature type="binding site" evidence="1">
    <location>
        <position position="34"/>
    </location>
    <ligand>
        <name>Zn(2+)</name>
        <dbReference type="ChEBI" id="CHEBI:29105"/>
    </ligand>
</feature>
<feature type="binding site" evidence="1">
    <location>
        <position position="50"/>
    </location>
    <ligand>
        <name>Zn(2+)</name>
        <dbReference type="ChEBI" id="CHEBI:29105"/>
    </ligand>
</feature>
<feature type="binding site" evidence="1">
    <location>
        <position position="53"/>
    </location>
    <ligand>
        <name>Zn(2+)</name>
        <dbReference type="ChEBI" id="CHEBI:29105"/>
    </ligand>
</feature>
<dbReference type="EC" id="2.1.3.15" evidence="1"/>
<dbReference type="EMBL" id="CP000285">
    <property type="protein sequence ID" value="ABE58618.1"/>
    <property type="molecule type" value="Genomic_DNA"/>
</dbReference>
<dbReference type="RefSeq" id="WP_011506564.1">
    <property type="nucleotide sequence ID" value="NC_007963.1"/>
</dbReference>
<dbReference type="SMR" id="Q1QY40"/>
<dbReference type="STRING" id="290398.Csal_1263"/>
<dbReference type="GeneID" id="95334003"/>
<dbReference type="KEGG" id="csa:Csal_1263"/>
<dbReference type="eggNOG" id="COG0777">
    <property type="taxonomic scope" value="Bacteria"/>
</dbReference>
<dbReference type="HOGENOM" id="CLU_015486_1_0_6"/>
<dbReference type="OrthoDB" id="9772975at2"/>
<dbReference type="UniPathway" id="UPA00655">
    <property type="reaction ID" value="UER00711"/>
</dbReference>
<dbReference type="Proteomes" id="UP000000239">
    <property type="component" value="Chromosome"/>
</dbReference>
<dbReference type="GO" id="GO:0009329">
    <property type="term" value="C:acetate CoA-transferase complex"/>
    <property type="evidence" value="ECO:0007669"/>
    <property type="project" value="TreeGrafter"/>
</dbReference>
<dbReference type="GO" id="GO:0003989">
    <property type="term" value="F:acetyl-CoA carboxylase activity"/>
    <property type="evidence" value="ECO:0007669"/>
    <property type="project" value="InterPro"/>
</dbReference>
<dbReference type="GO" id="GO:0005524">
    <property type="term" value="F:ATP binding"/>
    <property type="evidence" value="ECO:0007669"/>
    <property type="project" value="UniProtKB-KW"/>
</dbReference>
<dbReference type="GO" id="GO:0016743">
    <property type="term" value="F:carboxyl- or carbamoyltransferase activity"/>
    <property type="evidence" value="ECO:0007669"/>
    <property type="project" value="UniProtKB-UniRule"/>
</dbReference>
<dbReference type="GO" id="GO:0008270">
    <property type="term" value="F:zinc ion binding"/>
    <property type="evidence" value="ECO:0007669"/>
    <property type="project" value="UniProtKB-UniRule"/>
</dbReference>
<dbReference type="GO" id="GO:0006633">
    <property type="term" value="P:fatty acid biosynthetic process"/>
    <property type="evidence" value="ECO:0007669"/>
    <property type="project" value="UniProtKB-KW"/>
</dbReference>
<dbReference type="GO" id="GO:2001295">
    <property type="term" value="P:malonyl-CoA biosynthetic process"/>
    <property type="evidence" value="ECO:0007669"/>
    <property type="project" value="UniProtKB-UniRule"/>
</dbReference>
<dbReference type="Gene3D" id="3.90.226.10">
    <property type="entry name" value="2-enoyl-CoA Hydratase, Chain A, domain 1"/>
    <property type="match status" value="1"/>
</dbReference>
<dbReference type="HAMAP" id="MF_01395">
    <property type="entry name" value="AcetylCoA_CT_beta"/>
    <property type="match status" value="1"/>
</dbReference>
<dbReference type="InterPro" id="IPR034733">
    <property type="entry name" value="AcCoA_carboxyl_beta"/>
</dbReference>
<dbReference type="InterPro" id="IPR000438">
    <property type="entry name" value="Acetyl_CoA_COase_Trfase_b_su"/>
</dbReference>
<dbReference type="InterPro" id="IPR029045">
    <property type="entry name" value="ClpP/crotonase-like_dom_sf"/>
</dbReference>
<dbReference type="InterPro" id="IPR011762">
    <property type="entry name" value="COA_CT_N"/>
</dbReference>
<dbReference type="InterPro" id="IPR041010">
    <property type="entry name" value="Znf-ACC"/>
</dbReference>
<dbReference type="NCBIfam" id="TIGR00515">
    <property type="entry name" value="accD"/>
    <property type="match status" value="1"/>
</dbReference>
<dbReference type="PANTHER" id="PTHR42995">
    <property type="entry name" value="ACETYL-COENZYME A CARBOXYLASE CARBOXYL TRANSFERASE SUBUNIT BETA, CHLOROPLASTIC"/>
    <property type="match status" value="1"/>
</dbReference>
<dbReference type="PANTHER" id="PTHR42995:SF5">
    <property type="entry name" value="ACETYL-COENZYME A CARBOXYLASE CARBOXYL TRANSFERASE SUBUNIT BETA, CHLOROPLASTIC"/>
    <property type="match status" value="1"/>
</dbReference>
<dbReference type="Pfam" id="PF01039">
    <property type="entry name" value="Carboxyl_trans"/>
    <property type="match status" value="1"/>
</dbReference>
<dbReference type="Pfam" id="PF17848">
    <property type="entry name" value="Zn_ribbon_ACC"/>
    <property type="match status" value="1"/>
</dbReference>
<dbReference type="PRINTS" id="PR01070">
    <property type="entry name" value="ACCCTRFRASEB"/>
</dbReference>
<dbReference type="SUPFAM" id="SSF52096">
    <property type="entry name" value="ClpP/crotonase"/>
    <property type="match status" value="1"/>
</dbReference>
<dbReference type="PROSITE" id="PS50980">
    <property type="entry name" value="COA_CT_NTER"/>
    <property type="match status" value="1"/>
</dbReference>
<keyword id="KW-0067">ATP-binding</keyword>
<keyword id="KW-0963">Cytoplasm</keyword>
<keyword id="KW-0275">Fatty acid biosynthesis</keyword>
<keyword id="KW-0276">Fatty acid metabolism</keyword>
<keyword id="KW-0444">Lipid biosynthesis</keyword>
<keyword id="KW-0443">Lipid metabolism</keyword>
<keyword id="KW-0479">Metal-binding</keyword>
<keyword id="KW-0547">Nucleotide-binding</keyword>
<keyword id="KW-1185">Reference proteome</keyword>
<keyword id="KW-0808">Transferase</keyword>
<keyword id="KW-0862">Zinc</keyword>
<keyword id="KW-0863">Zinc-finger</keyword>
<reference key="1">
    <citation type="journal article" date="2011" name="Stand. Genomic Sci.">
        <title>Complete genome sequence of the halophilic and highly halotolerant Chromohalobacter salexigens type strain (1H11(T)).</title>
        <authorList>
            <person name="Copeland A."/>
            <person name="O'Connor K."/>
            <person name="Lucas S."/>
            <person name="Lapidus A."/>
            <person name="Berry K.W."/>
            <person name="Detter J.C."/>
            <person name="Del Rio T.G."/>
            <person name="Hammon N."/>
            <person name="Dalin E."/>
            <person name="Tice H."/>
            <person name="Pitluck S."/>
            <person name="Bruce D."/>
            <person name="Goodwin L."/>
            <person name="Han C."/>
            <person name="Tapia R."/>
            <person name="Saunders E."/>
            <person name="Schmutz J."/>
            <person name="Brettin T."/>
            <person name="Larimer F."/>
            <person name="Land M."/>
            <person name="Hauser L."/>
            <person name="Vargas C."/>
            <person name="Nieto J.J."/>
            <person name="Kyrpides N.C."/>
            <person name="Ivanova N."/>
            <person name="Goker M."/>
            <person name="Klenk H.P."/>
            <person name="Csonka L.N."/>
            <person name="Woyke T."/>
        </authorList>
    </citation>
    <scope>NUCLEOTIDE SEQUENCE [LARGE SCALE GENOMIC DNA]</scope>
    <source>
        <strain>ATCC BAA-138 / DSM 3043 / CIP 106854 / NCIMB 13768 / 1H11</strain>
    </source>
</reference>
<proteinExistence type="inferred from homology"/>
<evidence type="ECO:0000255" key="1">
    <source>
        <dbReference type="HAMAP-Rule" id="MF_01395"/>
    </source>
</evidence>
<evidence type="ECO:0000255" key="2">
    <source>
        <dbReference type="PROSITE-ProRule" id="PRU01136"/>
    </source>
</evidence>
<evidence type="ECO:0000256" key="3">
    <source>
        <dbReference type="SAM" id="MobiDB-lite"/>
    </source>
</evidence>
<name>ACCD_CHRSD</name>
<protein>
    <recommendedName>
        <fullName evidence="1">Acetyl-coenzyme A carboxylase carboxyl transferase subunit beta</fullName>
        <shortName evidence="1">ACCase subunit beta</shortName>
        <shortName evidence="1">Acetyl-CoA carboxylase carboxyltransferase subunit beta</shortName>
        <ecNumber evidence="1">2.1.3.15</ecNumber>
    </recommendedName>
</protein>
<gene>
    <name evidence="1" type="primary">accD</name>
    <name type="ordered locus">Csal_1263</name>
</gene>